<evidence type="ECO:0000255" key="1">
    <source>
        <dbReference type="HAMAP-Rule" id="MF_01009"/>
    </source>
</evidence>
<accession>B6J185</accession>
<feature type="chain" id="PRO_1000134847" description="Thiosulfate sulfurtransferase GlpE">
    <location>
        <begin position="1"/>
        <end position="107"/>
    </location>
</feature>
<feature type="domain" description="Rhodanese" evidence="1">
    <location>
        <begin position="16"/>
        <end position="104"/>
    </location>
</feature>
<feature type="active site" description="Cysteine persulfide intermediate" evidence="1">
    <location>
        <position position="64"/>
    </location>
</feature>
<name>GLPE_COXB2</name>
<keyword id="KW-0963">Cytoplasm</keyword>
<keyword id="KW-0808">Transferase</keyword>
<gene>
    <name evidence="1" type="primary">glpE</name>
    <name type="ordered locus">CbuG_1411</name>
</gene>
<protein>
    <recommendedName>
        <fullName evidence="1">Thiosulfate sulfurtransferase GlpE</fullName>
        <ecNumber evidence="1">2.8.1.1</ecNumber>
    </recommendedName>
</protein>
<sequence>MMYKQISHLEAWELVKKRDIVIADVRDQDSYEEEHIANALHLSMAKLQEYSEKADKEKPVLVYCYHGISSQSVAQHLVEQGFKEVYSLIGGFETWKAHHPTSDANKN</sequence>
<comment type="function">
    <text evidence="1">Transferase that catalyzes the transfer of sulfur from thiosulfate to thiophilic acceptors such as cyanide or dithiols. May function in a CysM-independent thiosulfate assimilation pathway by catalyzing the conversion of thiosulfate to sulfite, which can then be used for L-cysteine biosynthesis.</text>
</comment>
<comment type="catalytic activity">
    <reaction evidence="1">
        <text>thiosulfate + hydrogen cyanide = thiocyanate + sulfite + 2 H(+)</text>
        <dbReference type="Rhea" id="RHEA:16881"/>
        <dbReference type="ChEBI" id="CHEBI:15378"/>
        <dbReference type="ChEBI" id="CHEBI:17359"/>
        <dbReference type="ChEBI" id="CHEBI:18022"/>
        <dbReference type="ChEBI" id="CHEBI:18407"/>
        <dbReference type="ChEBI" id="CHEBI:33542"/>
        <dbReference type="EC" id="2.8.1.1"/>
    </reaction>
</comment>
<comment type="catalytic activity">
    <reaction evidence="1">
        <text>thiosulfate + [thioredoxin]-dithiol = [thioredoxin]-disulfide + hydrogen sulfide + sulfite + 2 H(+)</text>
        <dbReference type="Rhea" id="RHEA:83859"/>
        <dbReference type="Rhea" id="RHEA-COMP:10698"/>
        <dbReference type="Rhea" id="RHEA-COMP:10700"/>
        <dbReference type="ChEBI" id="CHEBI:15378"/>
        <dbReference type="ChEBI" id="CHEBI:17359"/>
        <dbReference type="ChEBI" id="CHEBI:29919"/>
        <dbReference type="ChEBI" id="CHEBI:29950"/>
        <dbReference type="ChEBI" id="CHEBI:33542"/>
        <dbReference type="ChEBI" id="CHEBI:50058"/>
    </reaction>
</comment>
<comment type="subcellular location">
    <subcellularLocation>
        <location evidence="1">Cytoplasm</location>
    </subcellularLocation>
</comment>
<comment type="similarity">
    <text evidence="1">Belongs to the GlpE family.</text>
</comment>
<organism>
    <name type="scientific">Coxiella burnetii (strain CbuG_Q212)</name>
    <name type="common">Coxiella burnetii (strain Q212)</name>
    <dbReference type="NCBI Taxonomy" id="434923"/>
    <lineage>
        <taxon>Bacteria</taxon>
        <taxon>Pseudomonadati</taxon>
        <taxon>Pseudomonadota</taxon>
        <taxon>Gammaproteobacteria</taxon>
        <taxon>Legionellales</taxon>
        <taxon>Coxiellaceae</taxon>
        <taxon>Coxiella</taxon>
    </lineage>
</organism>
<proteinExistence type="inferred from homology"/>
<reference key="1">
    <citation type="journal article" date="2009" name="Infect. Immun.">
        <title>Comparative genomics reveal extensive transposon-mediated genomic plasticity and diversity among potential effector proteins within the genus Coxiella.</title>
        <authorList>
            <person name="Beare P.A."/>
            <person name="Unsworth N."/>
            <person name="Andoh M."/>
            <person name="Voth D.E."/>
            <person name="Omsland A."/>
            <person name="Gilk S.D."/>
            <person name="Williams K.P."/>
            <person name="Sobral B.W."/>
            <person name="Kupko J.J. III"/>
            <person name="Porcella S.F."/>
            <person name="Samuel J.E."/>
            <person name="Heinzen R.A."/>
        </authorList>
    </citation>
    <scope>NUCLEOTIDE SEQUENCE [LARGE SCALE GENOMIC DNA]</scope>
    <source>
        <strain>CbuG_Q212</strain>
    </source>
</reference>
<dbReference type="EC" id="2.8.1.1" evidence="1"/>
<dbReference type="EMBL" id="CP001019">
    <property type="protein sequence ID" value="ACJ18713.1"/>
    <property type="molecule type" value="Genomic_DNA"/>
</dbReference>
<dbReference type="RefSeq" id="WP_010957677.1">
    <property type="nucleotide sequence ID" value="NC_011527.1"/>
</dbReference>
<dbReference type="SMR" id="B6J185"/>
<dbReference type="KEGG" id="cbg:CbuG_1411"/>
<dbReference type="HOGENOM" id="CLU_089574_14_0_6"/>
<dbReference type="GO" id="GO:0005737">
    <property type="term" value="C:cytoplasm"/>
    <property type="evidence" value="ECO:0007669"/>
    <property type="project" value="UniProtKB-SubCell"/>
</dbReference>
<dbReference type="GO" id="GO:0004792">
    <property type="term" value="F:thiosulfate-cyanide sulfurtransferase activity"/>
    <property type="evidence" value="ECO:0007669"/>
    <property type="project" value="UniProtKB-UniRule"/>
</dbReference>
<dbReference type="GO" id="GO:0006071">
    <property type="term" value="P:glycerol metabolic process"/>
    <property type="evidence" value="ECO:0007669"/>
    <property type="project" value="UniProtKB-UniRule"/>
</dbReference>
<dbReference type="CDD" id="cd01444">
    <property type="entry name" value="GlpE_ST"/>
    <property type="match status" value="1"/>
</dbReference>
<dbReference type="Gene3D" id="3.40.250.10">
    <property type="entry name" value="Rhodanese-like domain"/>
    <property type="match status" value="1"/>
</dbReference>
<dbReference type="HAMAP" id="MF_01009">
    <property type="entry name" value="Thiosulf_sulfurtr"/>
    <property type="match status" value="1"/>
</dbReference>
<dbReference type="InterPro" id="IPR050229">
    <property type="entry name" value="GlpE_sulfurtransferase"/>
</dbReference>
<dbReference type="InterPro" id="IPR001763">
    <property type="entry name" value="Rhodanese-like_dom"/>
</dbReference>
<dbReference type="InterPro" id="IPR036873">
    <property type="entry name" value="Rhodanese-like_dom_sf"/>
</dbReference>
<dbReference type="InterPro" id="IPR023695">
    <property type="entry name" value="Thiosulf_sulfurTrfase"/>
</dbReference>
<dbReference type="NCBIfam" id="NF001195">
    <property type="entry name" value="PRK00162.1"/>
    <property type="match status" value="1"/>
</dbReference>
<dbReference type="PANTHER" id="PTHR43031">
    <property type="entry name" value="FAD-DEPENDENT OXIDOREDUCTASE"/>
    <property type="match status" value="1"/>
</dbReference>
<dbReference type="PANTHER" id="PTHR43031:SF6">
    <property type="entry name" value="THIOSULFATE SULFURTRANSFERASE GLPE"/>
    <property type="match status" value="1"/>
</dbReference>
<dbReference type="Pfam" id="PF00581">
    <property type="entry name" value="Rhodanese"/>
    <property type="match status" value="1"/>
</dbReference>
<dbReference type="SMART" id="SM00450">
    <property type="entry name" value="RHOD"/>
    <property type="match status" value="1"/>
</dbReference>
<dbReference type="SUPFAM" id="SSF52821">
    <property type="entry name" value="Rhodanese/Cell cycle control phosphatase"/>
    <property type="match status" value="1"/>
</dbReference>
<dbReference type="PROSITE" id="PS50206">
    <property type="entry name" value="RHODANESE_3"/>
    <property type="match status" value="1"/>
</dbReference>